<organism>
    <name type="scientific">Xanthomonas campestris pv. campestris (strain 8004)</name>
    <dbReference type="NCBI Taxonomy" id="314565"/>
    <lineage>
        <taxon>Bacteria</taxon>
        <taxon>Pseudomonadati</taxon>
        <taxon>Pseudomonadota</taxon>
        <taxon>Gammaproteobacteria</taxon>
        <taxon>Lysobacterales</taxon>
        <taxon>Lysobacteraceae</taxon>
        <taxon>Xanthomonas</taxon>
    </lineage>
</organism>
<gene>
    <name evidence="1" type="primary">rpiA</name>
    <name type="ordered locus">XC_0899</name>
</gene>
<comment type="function">
    <text evidence="1">Catalyzes the reversible conversion of ribose-5-phosphate to ribulose 5-phosphate.</text>
</comment>
<comment type="catalytic activity">
    <reaction evidence="1">
        <text>aldehydo-D-ribose 5-phosphate = D-ribulose 5-phosphate</text>
        <dbReference type="Rhea" id="RHEA:14657"/>
        <dbReference type="ChEBI" id="CHEBI:58121"/>
        <dbReference type="ChEBI" id="CHEBI:58273"/>
        <dbReference type="EC" id="5.3.1.6"/>
    </reaction>
</comment>
<comment type="pathway">
    <text evidence="1">Carbohydrate degradation; pentose phosphate pathway; D-ribose 5-phosphate from D-ribulose 5-phosphate (non-oxidative stage): step 1/1.</text>
</comment>
<comment type="subunit">
    <text evidence="1">Homodimer.</text>
</comment>
<comment type="similarity">
    <text evidence="1">Belongs to the ribose 5-phosphate isomerase family.</text>
</comment>
<dbReference type="EC" id="5.3.1.6" evidence="1"/>
<dbReference type="EMBL" id="CP000050">
    <property type="protein sequence ID" value="AAY47973.1"/>
    <property type="molecule type" value="Genomic_DNA"/>
</dbReference>
<dbReference type="RefSeq" id="WP_011038367.1">
    <property type="nucleotide sequence ID" value="NZ_CP155948.1"/>
</dbReference>
<dbReference type="SMR" id="Q4UYA0"/>
<dbReference type="KEGG" id="xcb:XC_0899"/>
<dbReference type="HOGENOM" id="CLU_056590_1_1_6"/>
<dbReference type="UniPathway" id="UPA00115">
    <property type="reaction ID" value="UER00412"/>
</dbReference>
<dbReference type="Proteomes" id="UP000000420">
    <property type="component" value="Chromosome"/>
</dbReference>
<dbReference type="GO" id="GO:0005829">
    <property type="term" value="C:cytosol"/>
    <property type="evidence" value="ECO:0007669"/>
    <property type="project" value="TreeGrafter"/>
</dbReference>
<dbReference type="GO" id="GO:0004751">
    <property type="term" value="F:ribose-5-phosphate isomerase activity"/>
    <property type="evidence" value="ECO:0007669"/>
    <property type="project" value="UniProtKB-UniRule"/>
</dbReference>
<dbReference type="GO" id="GO:0006014">
    <property type="term" value="P:D-ribose metabolic process"/>
    <property type="evidence" value="ECO:0007669"/>
    <property type="project" value="TreeGrafter"/>
</dbReference>
<dbReference type="GO" id="GO:0009052">
    <property type="term" value="P:pentose-phosphate shunt, non-oxidative branch"/>
    <property type="evidence" value="ECO:0007669"/>
    <property type="project" value="UniProtKB-UniRule"/>
</dbReference>
<dbReference type="CDD" id="cd01398">
    <property type="entry name" value="RPI_A"/>
    <property type="match status" value="1"/>
</dbReference>
<dbReference type="FunFam" id="3.30.70.260:FF:000004">
    <property type="entry name" value="Ribose-5-phosphate isomerase A"/>
    <property type="match status" value="1"/>
</dbReference>
<dbReference type="FunFam" id="3.40.50.1360:FF:000001">
    <property type="entry name" value="Ribose-5-phosphate isomerase A"/>
    <property type="match status" value="1"/>
</dbReference>
<dbReference type="Gene3D" id="3.30.70.260">
    <property type="match status" value="1"/>
</dbReference>
<dbReference type="Gene3D" id="3.40.50.1360">
    <property type="match status" value="1"/>
</dbReference>
<dbReference type="HAMAP" id="MF_00170">
    <property type="entry name" value="Rib_5P_isom_A"/>
    <property type="match status" value="1"/>
</dbReference>
<dbReference type="InterPro" id="IPR037171">
    <property type="entry name" value="NagB/RpiA_transferase-like"/>
</dbReference>
<dbReference type="InterPro" id="IPR020672">
    <property type="entry name" value="Ribose5P_isomerase_typA_subgr"/>
</dbReference>
<dbReference type="InterPro" id="IPR004788">
    <property type="entry name" value="Ribose5P_isomerase_type_A"/>
</dbReference>
<dbReference type="NCBIfam" id="NF001924">
    <property type="entry name" value="PRK00702.1"/>
    <property type="match status" value="1"/>
</dbReference>
<dbReference type="NCBIfam" id="TIGR00021">
    <property type="entry name" value="rpiA"/>
    <property type="match status" value="1"/>
</dbReference>
<dbReference type="PANTHER" id="PTHR11934">
    <property type="entry name" value="RIBOSE-5-PHOSPHATE ISOMERASE"/>
    <property type="match status" value="1"/>
</dbReference>
<dbReference type="PANTHER" id="PTHR11934:SF0">
    <property type="entry name" value="RIBOSE-5-PHOSPHATE ISOMERASE"/>
    <property type="match status" value="1"/>
</dbReference>
<dbReference type="Pfam" id="PF06026">
    <property type="entry name" value="Rib_5-P_isom_A"/>
    <property type="match status" value="1"/>
</dbReference>
<dbReference type="SUPFAM" id="SSF75445">
    <property type="entry name" value="D-ribose-5-phosphate isomerase (RpiA), lid domain"/>
    <property type="match status" value="1"/>
</dbReference>
<dbReference type="SUPFAM" id="SSF100950">
    <property type="entry name" value="NagB/RpiA/CoA transferase-like"/>
    <property type="match status" value="1"/>
</dbReference>
<proteinExistence type="inferred from homology"/>
<keyword id="KW-0413">Isomerase</keyword>
<accession>Q4UYA0</accession>
<name>RPIA_XANC8</name>
<evidence type="ECO:0000255" key="1">
    <source>
        <dbReference type="HAMAP-Rule" id="MF_00170"/>
    </source>
</evidence>
<reference key="1">
    <citation type="journal article" date="2005" name="Genome Res.">
        <title>Comparative and functional genomic analyses of the pathogenicity of phytopathogen Xanthomonas campestris pv. campestris.</title>
        <authorList>
            <person name="Qian W."/>
            <person name="Jia Y."/>
            <person name="Ren S.-X."/>
            <person name="He Y.-Q."/>
            <person name="Feng J.-X."/>
            <person name="Lu L.-F."/>
            <person name="Sun Q."/>
            <person name="Ying G."/>
            <person name="Tang D.-J."/>
            <person name="Tang H."/>
            <person name="Wu W."/>
            <person name="Hao P."/>
            <person name="Wang L."/>
            <person name="Jiang B.-L."/>
            <person name="Zeng S."/>
            <person name="Gu W.-Y."/>
            <person name="Lu G."/>
            <person name="Rong L."/>
            <person name="Tian Y."/>
            <person name="Yao Z."/>
            <person name="Fu G."/>
            <person name="Chen B."/>
            <person name="Fang R."/>
            <person name="Qiang B."/>
            <person name="Chen Z."/>
            <person name="Zhao G.-P."/>
            <person name="Tang J.-L."/>
            <person name="He C."/>
        </authorList>
    </citation>
    <scope>NUCLEOTIDE SEQUENCE [LARGE SCALE GENOMIC DNA]</scope>
    <source>
        <strain>8004</strain>
    </source>
</reference>
<sequence>MSEAKRLAAEKAIDYVEDGMIVGVGTGSTVAYFIDALGRIGHRIKGAVSSSEQSTARLRQHGIEVLDLNHTGTLSLYVDGADECDPNRCLIKGGGAALTREKIIAEASERFICIVDPSKQVPVLGNFPLPVEVIPMARSLVARQILALTGGQPVWRDGVVTDNGNVVLDVHNLHITDPVALERNLNQIPGVVCVGLFARRPADVVIVGGETPRVL</sequence>
<protein>
    <recommendedName>
        <fullName evidence="1">Ribose-5-phosphate isomerase A</fullName>
        <ecNumber evidence="1">5.3.1.6</ecNumber>
    </recommendedName>
    <alternativeName>
        <fullName evidence="1">Phosphoriboisomerase A</fullName>
        <shortName evidence="1">PRI</shortName>
    </alternativeName>
</protein>
<feature type="chain" id="PRO_1000017028" description="Ribose-5-phosphate isomerase A">
    <location>
        <begin position="1"/>
        <end position="215"/>
    </location>
</feature>
<feature type="active site" description="Proton acceptor" evidence="1">
    <location>
        <position position="101"/>
    </location>
</feature>
<feature type="binding site" evidence="1">
    <location>
        <begin position="26"/>
        <end position="29"/>
    </location>
    <ligand>
        <name>substrate</name>
    </ligand>
</feature>
<feature type="binding site" evidence="1">
    <location>
        <begin position="79"/>
        <end position="82"/>
    </location>
    <ligand>
        <name>substrate</name>
    </ligand>
</feature>
<feature type="binding site" evidence="1">
    <location>
        <begin position="92"/>
        <end position="95"/>
    </location>
    <ligand>
        <name>substrate</name>
    </ligand>
</feature>
<feature type="binding site" evidence="1">
    <location>
        <position position="119"/>
    </location>
    <ligand>
        <name>substrate</name>
    </ligand>
</feature>